<accession>Q2TBK5</accession>
<proteinExistence type="evidence at transcript level"/>
<comment type="function">
    <text evidence="2">Potential role in vesicular protein trafficking, mainly in the early secretory pathway. May act as a cargo receptor at the lumenal side for incorporation of secretory cargo molecules into transport vesicles and may be involved in vesicle coat formation at the cytoplasmic side. Plays a positive role in IL-33-mediated IL-8 and IL-6 production by interacting with interleukin-33 receptor IL1RL1. Plays also a role in the modulation of innate immune signaling through the cGAS-STING pathway by interacting with RNF26.</text>
</comment>
<comment type="subunit">
    <text evidence="2">Homodimer in endoplasmic reticulum, endoplasmic reticulum-Golgi intermediate compartment and cis-Golgi network. Interacts with IL1RL1. Interacts with RNF26; this interaction is important to modulate innate immune signaling through the cGAS-STING pathway.</text>
</comment>
<comment type="subcellular location">
    <subcellularLocation>
        <location evidence="2">Cell membrane</location>
        <topology evidence="3">Single-pass type I membrane protein</topology>
    </subcellularLocation>
    <subcellularLocation>
        <location evidence="2">Endoplasmic reticulum membrane</location>
        <topology evidence="3">Single-pass type I membrane protein</topology>
    </subcellularLocation>
    <subcellularLocation>
        <location evidence="2">Golgi apparatus</location>
        <location evidence="2">cis-Golgi network membrane</location>
        <topology evidence="3">Single-pass type I membrane protein</topology>
    </subcellularLocation>
    <subcellularLocation>
        <location evidence="2">Endoplasmic reticulum-Golgi intermediate compartment membrane</location>
        <topology evidence="3">Single-pass type I membrane protein</topology>
    </subcellularLocation>
</comment>
<comment type="similarity">
    <text evidence="5">Belongs to the EMP24/GP25L family.</text>
</comment>
<gene>
    <name type="primary">TMED1</name>
</gene>
<keyword id="KW-1003">Cell membrane</keyword>
<keyword id="KW-0175">Coiled coil</keyword>
<keyword id="KW-0256">Endoplasmic reticulum</keyword>
<keyword id="KW-0333">Golgi apparatus</keyword>
<keyword id="KW-0472">Membrane</keyword>
<keyword id="KW-0653">Protein transport</keyword>
<keyword id="KW-1185">Reference proteome</keyword>
<keyword id="KW-0732">Signal</keyword>
<keyword id="KW-0812">Transmembrane</keyword>
<keyword id="KW-1133">Transmembrane helix</keyword>
<keyword id="KW-0813">Transport</keyword>
<feature type="signal peptide" evidence="1">
    <location>
        <begin position="1"/>
        <end position="23"/>
    </location>
</feature>
<feature type="chain" id="PRO_0000248018" description="Transmembrane emp24 domain-containing protein 1">
    <location>
        <begin position="24"/>
        <end position="227"/>
    </location>
</feature>
<feature type="topological domain" description="Extracellular" evidence="3">
    <location>
        <begin position="24"/>
        <end position="194"/>
    </location>
</feature>
<feature type="transmembrane region" description="Helical" evidence="3">
    <location>
        <begin position="195"/>
        <end position="215"/>
    </location>
</feature>
<feature type="topological domain" description="Cytoplasmic" evidence="3">
    <location>
        <begin position="216"/>
        <end position="227"/>
    </location>
</feature>
<feature type="domain" description="GOLD" evidence="4">
    <location>
        <begin position="43"/>
        <end position="125"/>
    </location>
</feature>
<feature type="coiled-coil region" evidence="3">
    <location>
        <begin position="145"/>
        <end position="170"/>
    </location>
</feature>
<feature type="short sequence motif" description="COPI vesicle coat-binding" evidence="3">
    <location>
        <begin position="218"/>
        <end position="227"/>
    </location>
</feature>
<feature type="short sequence motif" description="COPII vesicle coat-binding" evidence="3">
    <location>
        <begin position="218"/>
        <end position="219"/>
    </location>
</feature>
<sequence length="227" mass="25138">MMAAGTALGLALWLLLPPVGVGGAGPPPIQDGEFTFLLPAGRKQCFYQSAPANASLETEYQVIGGAGLDVDFSLESPQGVLLVSESRKADGVHTVEPTEAGDYKLCFDNSFSTISEKLVFFELIFDSLQDEEEVEGWAEAVEPEEILEVKMEDIKESIETMRIRLERSIQVLTLLRAFEARDRNLQEGNLERVNFWSAVNVAVLLLVAVLQVCTLKRFFQDKRPVPM</sequence>
<dbReference type="EMBL" id="BC110006">
    <property type="protein sequence ID" value="AAI10007.1"/>
    <property type="molecule type" value="mRNA"/>
</dbReference>
<dbReference type="RefSeq" id="NP_001033652.1">
    <property type="nucleotide sequence ID" value="NM_001038563.2"/>
</dbReference>
<dbReference type="SMR" id="Q2TBK5"/>
<dbReference type="FunCoup" id="Q2TBK5">
    <property type="interactions" value="1390"/>
</dbReference>
<dbReference type="STRING" id="9913.ENSBTAP00000014563"/>
<dbReference type="PaxDb" id="9913-ENSBTAP00000014563"/>
<dbReference type="PeptideAtlas" id="Q2TBK5"/>
<dbReference type="Ensembl" id="ENSBTAT00000014563.7">
    <property type="protein sequence ID" value="ENSBTAP00000014563.5"/>
    <property type="gene ID" value="ENSBTAG00000010968.7"/>
</dbReference>
<dbReference type="GeneID" id="538144"/>
<dbReference type="KEGG" id="bta:538144"/>
<dbReference type="CTD" id="11018"/>
<dbReference type="VEuPathDB" id="HostDB:ENSBTAG00000010968"/>
<dbReference type="VGNC" id="VGNC:35934">
    <property type="gene designation" value="TMED1"/>
</dbReference>
<dbReference type="eggNOG" id="KOG3287">
    <property type="taxonomic scope" value="Eukaryota"/>
</dbReference>
<dbReference type="GeneTree" id="ENSGT00940000158445"/>
<dbReference type="HOGENOM" id="CLU_066963_0_0_1"/>
<dbReference type="InParanoid" id="Q2TBK5"/>
<dbReference type="OMA" id="AGDYMIC"/>
<dbReference type="OrthoDB" id="5976732at2759"/>
<dbReference type="TreeFam" id="TF313000"/>
<dbReference type="Proteomes" id="UP000009136">
    <property type="component" value="Chromosome 7"/>
</dbReference>
<dbReference type="Bgee" id="ENSBTAG00000010968">
    <property type="expression patterns" value="Expressed in laryngeal cartilage and 106 other cell types or tissues"/>
</dbReference>
<dbReference type="GO" id="GO:0030134">
    <property type="term" value="C:COPII-coated ER to Golgi transport vesicle"/>
    <property type="evidence" value="ECO:0000318"/>
    <property type="project" value="GO_Central"/>
</dbReference>
<dbReference type="GO" id="GO:0005783">
    <property type="term" value="C:endoplasmic reticulum"/>
    <property type="evidence" value="ECO:0000318"/>
    <property type="project" value="GO_Central"/>
</dbReference>
<dbReference type="GO" id="GO:0005789">
    <property type="term" value="C:endoplasmic reticulum membrane"/>
    <property type="evidence" value="ECO:0007669"/>
    <property type="project" value="UniProtKB-SubCell"/>
</dbReference>
<dbReference type="GO" id="GO:0005793">
    <property type="term" value="C:endoplasmic reticulum-Golgi intermediate compartment"/>
    <property type="evidence" value="ECO:0000318"/>
    <property type="project" value="GO_Central"/>
</dbReference>
<dbReference type="GO" id="GO:0033116">
    <property type="term" value="C:endoplasmic reticulum-Golgi intermediate compartment membrane"/>
    <property type="evidence" value="ECO:0007669"/>
    <property type="project" value="UniProtKB-SubCell"/>
</dbReference>
<dbReference type="GO" id="GO:0005794">
    <property type="term" value="C:Golgi apparatus"/>
    <property type="evidence" value="ECO:0000318"/>
    <property type="project" value="GO_Central"/>
</dbReference>
<dbReference type="GO" id="GO:0005886">
    <property type="term" value="C:plasma membrane"/>
    <property type="evidence" value="ECO:0007669"/>
    <property type="project" value="UniProtKB-SubCell"/>
</dbReference>
<dbReference type="GO" id="GO:0006888">
    <property type="term" value="P:endoplasmic reticulum to Golgi vesicle-mediated transport"/>
    <property type="evidence" value="ECO:0000318"/>
    <property type="project" value="GO_Central"/>
</dbReference>
<dbReference type="GO" id="GO:0007030">
    <property type="term" value="P:Golgi organization"/>
    <property type="evidence" value="ECO:0000318"/>
    <property type="project" value="GO_Central"/>
</dbReference>
<dbReference type="GO" id="GO:0006886">
    <property type="term" value="P:intracellular protein transport"/>
    <property type="evidence" value="ECO:0000318"/>
    <property type="project" value="GO_Central"/>
</dbReference>
<dbReference type="InterPro" id="IPR015720">
    <property type="entry name" value="Emp24-like"/>
</dbReference>
<dbReference type="InterPro" id="IPR009038">
    <property type="entry name" value="GOLD_dom"/>
</dbReference>
<dbReference type="InterPro" id="IPR036598">
    <property type="entry name" value="GOLD_dom_sf"/>
</dbReference>
<dbReference type="PANTHER" id="PTHR22811">
    <property type="entry name" value="TRANSMEMBRANE EMP24 DOMAIN-CONTAINING PROTEIN"/>
    <property type="match status" value="1"/>
</dbReference>
<dbReference type="Pfam" id="PF01105">
    <property type="entry name" value="EMP24_GP25L"/>
    <property type="match status" value="1"/>
</dbReference>
<dbReference type="SMART" id="SM01190">
    <property type="entry name" value="EMP24_GP25L"/>
    <property type="match status" value="1"/>
</dbReference>
<dbReference type="SUPFAM" id="SSF101576">
    <property type="entry name" value="Supernatant protein factor (SPF), C-terminal domain"/>
    <property type="match status" value="1"/>
</dbReference>
<dbReference type="PROSITE" id="PS50866">
    <property type="entry name" value="GOLD"/>
    <property type="match status" value="1"/>
</dbReference>
<organism>
    <name type="scientific">Bos taurus</name>
    <name type="common">Bovine</name>
    <dbReference type="NCBI Taxonomy" id="9913"/>
    <lineage>
        <taxon>Eukaryota</taxon>
        <taxon>Metazoa</taxon>
        <taxon>Chordata</taxon>
        <taxon>Craniata</taxon>
        <taxon>Vertebrata</taxon>
        <taxon>Euteleostomi</taxon>
        <taxon>Mammalia</taxon>
        <taxon>Eutheria</taxon>
        <taxon>Laurasiatheria</taxon>
        <taxon>Artiodactyla</taxon>
        <taxon>Ruminantia</taxon>
        <taxon>Pecora</taxon>
        <taxon>Bovidae</taxon>
        <taxon>Bovinae</taxon>
        <taxon>Bos</taxon>
    </lineage>
</organism>
<reference key="1">
    <citation type="submission" date="2005-11" db="EMBL/GenBank/DDBJ databases">
        <authorList>
            <consortium name="NIH - Mammalian Gene Collection (MGC) project"/>
        </authorList>
    </citation>
    <scope>NUCLEOTIDE SEQUENCE [LARGE SCALE MRNA]</scope>
    <source>
        <strain>Crossbred X Angus</strain>
        <tissue>Liver</tissue>
    </source>
</reference>
<protein>
    <recommendedName>
        <fullName>Transmembrane emp24 domain-containing protein 1</fullName>
    </recommendedName>
    <alternativeName>
        <fullName>p24 family protein gamma-1</fullName>
        <shortName>p24gamma1</shortName>
    </alternativeName>
</protein>
<name>TMED1_BOVIN</name>
<evidence type="ECO:0000250" key="1"/>
<evidence type="ECO:0000250" key="2">
    <source>
        <dbReference type="UniProtKB" id="Q13445"/>
    </source>
</evidence>
<evidence type="ECO:0000255" key="3"/>
<evidence type="ECO:0000255" key="4">
    <source>
        <dbReference type="PROSITE-ProRule" id="PRU00096"/>
    </source>
</evidence>
<evidence type="ECO:0000305" key="5"/>